<gene>
    <name evidence="1" type="primary">rpsS</name>
    <name type="ordered locus">DICTH_0841</name>
</gene>
<keyword id="KW-0687">Ribonucleoprotein</keyword>
<keyword id="KW-0689">Ribosomal protein</keyword>
<keyword id="KW-0694">RNA-binding</keyword>
<keyword id="KW-0699">rRNA-binding</keyword>
<organism>
    <name type="scientific">Dictyoglomus thermophilum (strain ATCC 35947 / DSM 3960 / H-6-12)</name>
    <dbReference type="NCBI Taxonomy" id="309799"/>
    <lineage>
        <taxon>Bacteria</taxon>
        <taxon>Pseudomonadati</taxon>
        <taxon>Dictyoglomota</taxon>
        <taxon>Dictyoglomia</taxon>
        <taxon>Dictyoglomales</taxon>
        <taxon>Dictyoglomaceae</taxon>
        <taxon>Dictyoglomus</taxon>
    </lineage>
</organism>
<feature type="chain" id="PRO_1000127966" description="Small ribosomal subunit protein uS19">
    <location>
        <begin position="1"/>
        <end position="94"/>
    </location>
</feature>
<comment type="function">
    <text evidence="1">Protein S19 forms a complex with S13 that binds strongly to the 16S ribosomal RNA.</text>
</comment>
<comment type="similarity">
    <text evidence="1">Belongs to the universal ribosomal protein uS19 family.</text>
</comment>
<protein>
    <recommendedName>
        <fullName evidence="1">Small ribosomal subunit protein uS19</fullName>
    </recommendedName>
    <alternativeName>
        <fullName evidence="2">30S ribosomal protein S19</fullName>
    </alternativeName>
</protein>
<name>RS19_DICT6</name>
<dbReference type="EMBL" id="CP001146">
    <property type="protein sequence ID" value="ACI19366.1"/>
    <property type="molecule type" value="Genomic_DNA"/>
</dbReference>
<dbReference type="RefSeq" id="WP_012547998.1">
    <property type="nucleotide sequence ID" value="NC_011297.1"/>
</dbReference>
<dbReference type="SMR" id="B5YDU7"/>
<dbReference type="STRING" id="309799.DICTH_0841"/>
<dbReference type="PaxDb" id="309799-DICTH_0841"/>
<dbReference type="KEGG" id="dth:DICTH_0841"/>
<dbReference type="eggNOG" id="COG0185">
    <property type="taxonomic scope" value="Bacteria"/>
</dbReference>
<dbReference type="HOGENOM" id="CLU_144911_0_1_0"/>
<dbReference type="OrthoDB" id="9797833at2"/>
<dbReference type="Proteomes" id="UP000001733">
    <property type="component" value="Chromosome"/>
</dbReference>
<dbReference type="GO" id="GO:0005737">
    <property type="term" value="C:cytoplasm"/>
    <property type="evidence" value="ECO:0007669"/>
    <property type="project" value="UniProtKB-ARBA"/>
</dbReference>
<dbReference type="GO" id="GO:0015935">
    <property type="term" value="C:small ribosomal subunit"/>
    <property type="evidence" value="ECO:0007669"/>
    <property type="project" value="InterPro"/>
</dbReference>
<dbReference type="GO" id="GO:0019843">
    <property type="term" value="F:rRNA binding"/>
    <property type="evidence" value="ECO:0007669"/>
    <property type="project" value="UniProtKB-UniRule"/>
</dbReference>
<dbReference type="GO" id="GO:0003735">
    <property type="term" value="F:structural constituent of ribosome"/>
    <property type="evidence" value="ECO:0007669"/>
    <property type="project" value="InterPro"/>
</dbReference>
<dbReference type="GO" id="GO:0000028">
    <property type="term" value="P:ribosomal small subunit assembly"/>
    <property type="evidence" value="ECO:0007669"/>
    <property type="project" value="TreeGrafter"/>
</dbReference>
<dbReference type="GO" id="GO:0006412">
    <property type="term" value="P:translation"/>
    <property type="evidence" value="ECO:0007669"/>
    <property type="project" value="UniProtKB-UniRule"/>
</dbReference>
<dbReference type="FunFam" id="3.30.860.10:FF:000001">
    <property type="entry name" value="30S ribosomal protein S19"/>
    <property type="match status" value="1"/>
</dbReference>
<dbReference type="Gene3D" id="3.30.860.10">
    <property type="entry name" value="30s Ribosomal Protein S19, Chain A"/>
    <property type="match status" value="1"/>
</dbReference>
<dbReference type="HAMAP" id="MF_00531">
    <property type="entry name" value="Ribosomal_uS19"/>
    <property type="match status" value="1"/>
</dbReference>
<dbReference type="InterPro" id="IPR002222">
    <property type="entry name" value="Ribosomal_uS19"/>
</dbReference>
<dbReference type="InterPro" id="IPR005732">
    <property type="entry name" value="Ribosomal_uS19_bac-type"/>
</dbReference>
<dbReference type="InterPro" id="IPR020934">
    <property type="entry name" value="Ribosomal_uS19_CS"/>
</dbReference>
<dbReference type="InterPro" id="IPR023575">
    <property type="entry name" value="Ribosomal_uS19_SF"/>
</dbReference>
<dbReference type="NCBIfam" id="TIGR01050">
    <property type="entry name" value="rpsS_bact"/>
    <property type="match status" value="1"/>
</dbReference>
<dbReference type="PANTHER" id="PTHR11880">
    <property type="entry name" value="RIBOSOMAL PROTEIN S19P FAMILY MEMBER"/>
    <property type="match status" value="1"/>
</dbReference>
<dbReference type="PANTHER" id="PTHR11880:SF8">
    <property type="entry name" value="SMALL RIBOSOMAL SUBUNIT PROTEIN US19M"/>
    <property type="match status" value="1"/>
</dbReference>
<dbReference type="Pfam" id="PF00203">
    <property type="entry name" value="Ribosomal_S19"/>
    <property type="match status" value="1"/>
</dbReference>
<dbReference type="PIRSF" id="PIRSF002144">
    <property type="entry name" value="Ribosomal_S19"/>
    <property type="match status" value="1"/>
</dbReference>
<dbReference type="PRINTS" id="PR00975">
    <property type="entry name" value="RIBOSOMALS19"/>
</dbReference>
<dbReference type="SUPFAM" id="SSF54570">
    <property type="entry name" value="Ribosomal protein S19"/>
    <property type="match status" value="1"/>
</dbReference>
<dbReference type="PROSITE" id="PS00323">
    <property type="entry name" value="RIBOSOMAL_S19"/>
    <property type="match status" value="1"/>
</dbReference>
<proteinExistence type="inferred from homology"/>
<sequence>MGRSLKKGPYVDPKLLKKIRELNEKGEKRIIKTWSRRSVIVPEMVGHTIAVYNGRKHIPVYITENMIGHRLGEFAPTRTFTGHRIPTARITAIK</sequence>
<accession>B5YDU7</accession>
<reference key="1">
    <citation type="journal article" date="2014" name="Genome Announc.">
        <title>Complete Genome Sequence of the Extreme Thermophile Dictyoglomus thermophilum H-6-12.</title>
        <authorList>
            <person name="Coil D.A."/>
            <person name="Badger J.H."/>
            <person name="Forberger H.C."/>
            <person name="Riggs F."/>
            <person name="Madupu R."/>
            <person name="Fedorova N."/>
            <person name="Ward N."/>
            <person name="Robb F.T."/>
            <person name="Eisen J.A."/>
        </authorList>
    </citation>
    <scope>NUCLEOTIDE SEQUENCE [LARGE SCALE GENOMIC DNA]</scope>
    <source>
        <strain>ATCC 35947 / DSM 3960 / H-6-12</strain>
    </source>
</reference>
<evidence type="ECO:0000255" key="1">
    <source>
        <dbReference type="HAMAP-Rule" id="MF_00531"/>
    </source>
</evidence>
<evidence type="ECO:0000305" key="2"/>